<feature type="chain" id="PRO_1000026101" description="ATP-dependent Clp protease proteolytic subunit">
    <location>
        <begin position="1"/>
        <end position="196"/>
    </location>
</feature>
<feature type="active site" description="Nucleophile" evidence="1">
    <location>
        <position position="97"/>
    </location>
</feature>
<feature type="active site" evidence="1">
    <location>
        <position position="122"/>
    </location>
</feature>
<keyword id="KW-0963">Cytoplasm</keyword>
<keyword id="KW-0378">Hydrolase</keyword>
<keyword id="KW-0645">Protease</keyword>
<keyword id="KW-1185">Reference proteome</keyword>
<keyword id="KW-0720">Serine protease</keyword>
<dbReference type="EC" id="3.4.21.92" evidence="1"/>
<dbReference type="EMBL" id="CP000423">
    <property type="protein sequence ID" value="ABJ69762.1"/>
    <property type="molecule type" value="Genomic_DNA"/>
</dbReference>
<dbReference type="RefSeq" id="WP_003564255.1">
    <property type="nucleotide sequence ID" value="NC_008526.1"/>
</dbReference>
<dbReference type="RefSeq" id="YP_806204.1">
    <property type="nucleotide sequence ID" value="NC_008526.1"/>
</dbReference>
<dbReference type="SMR" id="Q03AL0"/>
<dbReference type="STRING" id="321967.LSEI_0963"/>
<dbReference type="MEROPS" id="S14.001"/>
<dbReference type="PaxDb" id="321967-LSEI_0963"/>
<dbReference type="GeneID" id="57089610"/>
<dbReference type="KEGG" id="lca:LSEI_0963"/>
<dbReference type="PATRIC" id="fig|321967.11.peg.933"/>
<dbReference type="HOGENOM" id="CLU_058707_3_2_9"/>
<dbReference type="Proteomes" id="UP000001651">
    <property type="component" value="Chromosome"/>
</dbReference>
<dbReference type="GO" id="GO:0005737">
    <property type="term" value="C:cytoplasm"/>
    <property type="evidence" value="ECO:0007669"/>
    <property type="project" value="UniProtKB-SubCell"/>
</dbReference>
<dbReference type="GO" id="GO:0009368">
    <property type="term" value="C:endopeptidase Clp complex"/>
    <property type="evidence" value="ECO:0007669"/>
    <property type="project" value="TreeGrafter"/>
</dbReference>
<dbReference type="GO" id="GO:0004176">
    <property type="term" value="F:ATP-dependent peptidase activity"/>
    <property type="evidence" value="ECO:0007669"/>
    <property type="project" value="InterPro"/>
</dbReference>
<dbReference type="GO" id="GO:0051117">
    <property type="term" value="F:ATPase binding"/>
    <property type="evidence" value="ECO:0007669"/>
    <property type="project" value="TreeGrafter"/>
</dbReference>
<dbReference type="GO" id="GO:0004252">
    <property type="term" value="F:serine-type endopeptidase activity"/>
    <property type="evidence" value="ECO:0007669"/>
    <property type="project" value="UniProtKB-UniRule"/>
</dbReference>
<dbReference type="GO" id="GO:0006515">
    <property type="term" value="P:protein quality control for misfolded or incompletely synthesized proteins"/>
    <property type="evidence" value="ECO:0007669"/>
    <property type="project" value="TreeGrafter"/>
</dbReference>
<dbReference type="CDD" id="cd07017">
    <property type="entry name" value="S14_ClpP_2"/>
    <property type="match status" value="1"/>
</dbReference>
<dbReference type="FunFam" id="3.90.226.10:FF:000001">
    <property type="entry name" value="ATP-dependent Clp protease proteolytic subunit"/>
    <property type="match status" value="1"/>
</dbReference>
<dbReference type="Gene3D" id="3.90.226.10">
    <property type="entry name" value="2-enoyl-CoA Hydratase, Chain A, domain 1"/>
    <property type="match status" value="1"/>
</dbReference>
<dbReference type="HAMAP" id="MF_00444">
    <property type="entry name" value="ClpP"/>
    <property type="match status" value="1"/>
</dbReference>
<dbReference type="InterPro" id="IPR001907">
    <property type="entry name" value="ClpP"/>
</dbReference>
<dbReference type="InterPro" id="IPR029045">
    <property type="entry name" value="ClpP/crotonase-like_dom_sf"/>
</dbReference>
<dbReference type="InterPro" id="IPR023562">
    <property type="entry name" value="ClpP/TepA"/>
</dbReference>
<dbReference type="InterPro" id="IPR033135">
    <property type="entry name" value="ClpP_His_AS"/>
</dbReference>
<dbReference type="InterPro" id="IPR018215">
    <property type="entry name" value="ClpP_Ser_AS"/>
</dbReference>
<dbReference type="NCBIfam" id="TIGR00493">
    <property type="entry name" value="clpP"/>
    <property type="match status" value="1"/>
</dbReference>
<dbReference type="NCBIfam" id="NF001368">
    <property type="entry name" value="PRK00277.1"/>
    <property type="match status" value="1"/>
</dbReference>
<dbReference type="NCBIfam" id="NF009205">
    <property type="entry name" value="PRK12553.1"/>
    <property type="match status" value="1"/>
</dbReference>
<dbReference type="PANTHER" id="PTHR10381">
    <property type="entry name" value="ATP-DEPENDENT CLP PROTEASE PROTEOLYTIC SUBUNIT"/>
    <property type="match status" value="1"/>
</dbReference>
<dbReference type="PANTHER" id="PTHR10381:SF70">
    <property type="entry name" value="ATP-DEPENDENT CLP PROTEASE PROTEOLYTIC SUBUNIT"/>
    <property type="match status" value="1"/>
</dbReference>
<dbReference type="Pfam" id="PF00574">
    <property type="entry name" value="CLP_protease"/>
    <property type="match status" value="1"/>
</dbReference>
<dbReference type="PRINTS" id="PR00127">
    <property type="entry name" value="CLPPROTEASEP"/>
</dbReference>
<dbReference type="SUPFAM" id="SSF52096">
    <property type="entry name" value="ClpP/crotonase"/>
    <property type="match status" value="1"/>
</dbReference>
<dbReference type="PROSITE" id="PS00382">
    <property type="entry name" value="CLP_PROTEASE_HIS"/>
    <property type="match status" value="1"/>
</dbReference>
<dbReference type="PROSITE" id="PS00381">
    <property type="entry name" value="CLP_PROTEASE_SER"/>
    <property type="match status" value="1"/>
</dbReference>
<name>CLPP_LACP3</name>
<evidence type="ECO:0000255" key="1">
    <source>
        <dbReference type="HAMAP-Rule" id="MF_00444"/>
    </source>
</evidence>
<proteinExistence type="inferred from homology"/>
<sequence>MLVPTVVEQTSRGERAYDIYSRLLKDRIIMLSGEVNDQMANSVIAQLLFLDAQDSEKDIYLYINSPGGVITSGLAMLDTMNFIKSDVQTIAIGMAASMASVLLAGGTKGKRFALPNSTILIHQPSGGAQGQQTEIEIAAEEILKTRRKMNQILADATGQTIEQIKKDTERDHYMSAQEAKDYGLIDDILVNKNTQK</sequence>
<protein>
    <recommendedName>
        <fullName evidence="1">ATP-dependent Clp protease proteolytic subunit</fullName>
        <ecNumber evidence="1">3.4.21.92</ecNumber>
    </recommendedName>
    <alternativeName>
        <fullName evidence="1">Endopeptidase Clp</fullName>
    </alternativeName>
</protein>
<organism>
    <name type="scientific">Lacticaseibacillus paracasei (strain ATCC 334 / BCRC 17002 / CCUG 31169 / CIP 107868 / KCTC 3260 / NRRL B-441)</name>
    <name type="common">Lactobacillus paracasei</name>
    <dbReference type="NCBI Taxonomy" id="321967"/>
    <lineage>
        <taxon>Bacteria</taxon>
        <taxon>Bacillati</taxon>
        <taxon>Bacillota</taxon>
        <taxon>Bacilli</taxon>
        <taxon>Lactobacillales</taxon>
        <taxon>Lactobacillaceae</taxon>
        <taxon>Lacticaseibacillus</taxon>
    </lineage>
</organism>
<reference key="1">
    <citation type="journal article" date="2006" name="Proc. Natl. Acad. Sci. U.S.A.">
        <title>Comparative genomics of the lactic acid bacteria.</title>
        <authorList>
            <person name="Makarova K.S."/>
            <person name="Slesarev A."/>
            <person name="Wolf Y.I."/>
            <person name="Sorokin A."/>
            <person name="Mirkin B."/>
            <person name="Koonin E.V."/>
            <person name="Pavlov A."/>
            <person name="Pavlova N."/>
            <person name="Karamychev V."/>
            <person name="Polouchine N."/>
            <person name="Shakhova V."/>
            <person name="Grigoriev I."/>
            <person name="Lou Y."/>
            <person name="Rohksar D."/>
            <person name="Lucas S."/>
            <person name="Huang K."/>
            <person name="Goodstein D.M."/>
            <person name="Hawkins T."/>
            <person name="Plengvidhya V."/>
            <person name="Welker D."/>
            <person name="Hughes J."/>
            <person name="Goh Y."/>
            <person name="Benson A."/>
            <person name="Baldwin K."/>
            <person name="Lee J.-H."/>
            <person name="Diaz-Muniz I."/>
            <person name="Dosti B."/>
            <person name="Smeianov V."/>
            <person name="Wechter W."/>
            <person name="Barabote R."/>
            <person name="Lorca G."/>
            <person name="Altermann E."/>
            <person name="Barrangou R."/>
            <person name="Ganesan B."/>
            <person name="Xie Y."/>
            <person name="Rawsthorne H."/>
            <person name="Tamir D."/>
            <person name="Parker C."/>
            <person name="Breidt F."/>
            <person name="Broadbent J.R."/>
            <person name="Hutkins R."/>
            <person name="O'Sullivan D."/>
            <person name="Steele J."/>
            <person name="Unlu G."/>
            <person name="Saier M.H. Jr."/>
            <person name="Klaenhammer T."/>
            <person name="Richardson P."/>
            <person name="Kozyavkin S."/>
            <person name="Weimer B.C."/>
            <person name="Mills D.A."/>
        </authorList>
    </citation>
    <scope>NUCLEOTIDE SEQUENCE [LARGE SCALE GENOMIC DNA]</scope>
    <source>
        <strain>ATCC 334 / BCRC 17002 / CCUG 31169 / CIP 107868 / KCTC 3260 / NRRL B-441</strain>
    </source>
</reference>
<comment type="function">
    <text evidence="1">Cleaves peptides in various proteins in a process that requires ATP hydrolysis. Has a chymotrypsin-like activity. Plays a major role in the degradation of misfolded proteins.</text>
</comment>
<comment type="catalytic activity">
    <reaction evidence="1">
        <text>Hydrolysis of proteins to small peptides in the presence of ATP and magnesium. alpha-casein is the usual test substrate. In the absence of ATP, only oligopeptides shorter than five residues are hydrolyzed (such as succinyl-Leu-Tyr-|-NHMec, and Leu-Tyr-Leu-|-Tyr-Trp, in which cleavage of the -Tyr-|-Leu- and -Tyr-|-Trp bonds also occurs).</text>
        <dbReference type="EC" id="3.4.21.92"/>
    </reaction>
</comment>
<comment type="subunit">
    <text evidence="1">Fourteen ClpP subunits assemble into 2 heptameric rings which stack back to back to give a disk-like structure with a central cavity, resembling the structure of eukaryotic proteasomes.</text>
</comment>
<comment type="subcellular location">
    <subcellularLocation>
        <location evidence="1">Cytoplasm</location>
    </subcellularLocation>
</comment>
<comment type="similarity">
    <text evidence="1">Belongs to the peptidase S14 family.</text>
</comment>
<gene>
    <name evidence="1" type="primary">clpP</name>
    <name type="ordered locus">LSEI_0963</name>
</gene>
<accession>Q03AL0</accession>